<proteinExistence type="inferred from homology"/>
<comment type="function">
    <text evidence="1">Binds the lower part of the 30S subunit head. Binds mRNA in the 70S ribosome, positioning it for translation.</text>
</comment>
<comment type="subunit">
    <text evidence="1">Part of the 30S ribosomal subunit. Forms a tight complex with proteins S10 and S14.</text>
</comment>
<comment type="similarity">
    <text evidence="1">Belongs to the universal ribosomal protein uS3 family.</text>
</comment>
<accession>Q5LXR7</accession>
<evidence type="ECO:0000255" key="1">
    <source>
        <dbReference type="HAMAP-Rule" id="MF_01309"/>
    </source>
</evidence>
<evidence type="ECO:0000305" key="2"/>
<reference key="1">
    <citation type="journal article" date="2004" name="Nat. Biotechnol.">
        <title>Complete sequence and comparative genome analysis of the dairy bacterium Streptococcus thermophilus.</title>
        <authorList>
            <person name="Bolotin A."/>
            <person name="Quinquis B."/>
            <person name="Renault P."/>
            <person name="Sorokin A."/>
            <person name="Ehrlich S.D."/>
            <person name="Kulakauskas S."/>
            <person name="Lapidus A."/>
            <person name="Goltsman E."/>
            <person name="Mazur M."/>
            <person name="Pusch G.D."/>
            <person name="Fonstein M."/>
            <person name="Overbeek R."/>
            <person name="Kyprides N."/>
            <person name="Purnelle B."/>
            <person name="Prozzi D."/>
            <person name="Ngui K."/>
            <person name="Masuy D."/>
            <person name="Hancy F."/>
            <person name="Burteau S."/>
            <person name="Boutry M."/>
            <person name="Delcour J."/>
            <person name="Goffeau A."/>
            <person name="Hols P."/>
        </authorList>
    </citation>
    <scope>NUCLEOTIDE SEQUENCE [LARGE SCALE GENOMIC DNA]</scope>
    <source>
        <strain>CNRZ 1066</strain>
    </source>
</reference>
<organism>
    <name type="scientific">Streptococcus thermophilus (strain CNRZ 1066)</name>
    <dbReference type="NCBI Taxonomy" id="299768"/>
    <lineage>
        <taxon>Bacteria</taxon>
        <taxon>Bacillati</taxon>
        <taxon>Bacillota</taxon>
        <taxon>Bacilli</taxon>
        <taxon>Lactobacillales</taxon>
        <taxon>Streptococcaceae</taxon>
        <taxon>Streptococcus</taxon>
    </lineage>
</organism>
<dbReference type="EMBL" id="CP000024">
    <property type="protein sequence ID" value="AAV63441.1"/>
    <property type="molecule type" value="Genomic_DNA"/>
</dbReference>
<dbReference type="RefSeq" id="WP_002952158.1">
    <property type="nucleotide sequence ID" value="NC_006449.1"/>
</dbReference>
<dbReference type="SMR" id="Q5LXR7"/>
<dbReference type="GeneID" id="66899656"/>
<dbReference type="KEGG" id="stc:str1928"/>
<dbReference type="HOGENOM" id="CLU_058591_0_2_9"/>
<dbReference type="GO" id="GO:0022627">
    <property type="term" value="C:cytosolic small ribosomal subunit"/>
    <property type="evidence" value="ECO:0007669"/>
    <property type="project" value="TreeGrafter"/>
</dbReference>
<dbReference type="GO" id="GO:0003729">
    <property type="term" value="F:mRNA binding"/>
    <property type="evidence" value="ECO:0007669"/>
    <property type="project" value="UniProtKB-UniRule"/>
</dbReference>
<dbReference type="GO" id="GO:0019843">
    <property type="term" value="F:rRNA binding"/>
    <property type="evidence" value="ECO:0007669"/>
    <property type="project" value="UniProtKB-UniRule"/>
</dbReference>
<dbReference type="GO" id="GO:0003735">
    <property type="term" value="F:structural constituent of ribosome"/>
    <property type="evidence" value="ECO:0007669"/>
    <property type="project" value="InterPro"/>
</dbReference>
<dbReference type="GO" id="GO:0006412">
    <property type="term" value="P:translation"/>
    <property type="evidence" value="ECO:0007669"/>
    <property type="project" value="UniProtKB-UniRule"/>
</dbReference>
<dbReference type="CDD" id="cd02412">
    <property type="entry name" value="KH-II_30S_S3"/>
    <property type="match status" value="1"/>
</dbReference>
<dbReference type="FunFam" id="3.30.1140.32:FF:000001">
    <property type="entry name" value="30S ribosomal protein S3"/>
    <property type="match status" value="1"/>
</dbReference>
<dbReference type="FunFam" id="3.30.300.20:FF:000001">
    <property type="entry name" value="30S ribosomal protein S3"/>
    <property type="match status" value="1"/>
</dbReference>
<dbReference type="Gene3D" id="3.30.300.20">
    <property type="match status" value="1"/>
</dbReference>
<dbReference type="Gene3D" id="3.30.1140.32">
    <property type="entry name" value="Ribosomal protein S3, C-terminal domain"/>
    <property type="match status" value="1"/>
</dbReference>
<dbReference type="HAMAP" id="MF_01309_B">
    <property type="entry name" value="Ribosomal_uS3_B"/>
    <property type="match status" value="1"/>
</dbReference>
<dbReference type="InterPro" id="IPR004087">
    <property type="entry name" value="KH_dom"/>
</dbReference>
<dbReference type="InterPro" id="IPR015946">
    <property type="entry name" value="KH_dom-like_a/b"/>
</dbReference>
<dbReference type="InterPro" id="IPR004044">
    <property type="entry name" value="KH_dom_type_2"/>
</dbReference>
<dbReference type="InterPro" id="IPR009019">
    <property type="entry name" value="KH_sf_prok-type"/>
</dbReference>
<dbReference type="InterPro" id="IPR036419">
    <property type="entry name" value="Ribosomal_S3_C_sf"/>
</dbReference>
<dbReference type="InterPro" id="IPR005704">
    <property type="entry name" value="Ribosomal_uS3_bac-typ"/>
</dbReference>
<dbReference type="InterPro" id="IPR001351">
    <property type="entry name" value="Ribosomal_uS3_C"/>
</dbReference>
<dbReference type="InterPro" id="IPR018280">
    <property type="entry name" value="Ribosomal_uS3_CS"/>
</dbReference>
<dbReference type="NCBIfam" id="TIGR01009">
    <property type="entry name" value="rpsC_bact"/>
    <property type="match status" value="1"/>
</dbReference>
<dbReference type="PANTHER" id="PTHR11760">
    <property type="entry name" value="30S/40S RIBOSOMAL PROTEIN S3"/>
    <property type="match status" value="1"/>
</dbReference>
<dbReference type="PANTHER" id="PTHR11760:SF19">
    <property type="entry name" value="SMALL RIBOSOMAL SUBUNIT PROTEIN US3C"/>
    <property type="match status" value="1"/>
</dbReference>
<dbReference type="Pfam" id="PF07650">
    <property type="entry name" value="KH_2"/>
    <property type="match status" value="1"/>
</dbReference>
<dbReference type="Pfam" id="PF00189">
    <property type="entry name" value="Ribosomal_S3_C"/>
    <property type="match status" value="1"/>
</dbReference>
<dbReference type="SMART" id="SM00322">
    <property type="entry name" value="KH"/>
    <property type="match status" value="1"/>
</dbReference>
<dbReference type="SUPFAM" id="SSF54814">
    <property type="entry name" value="Prokaryotic type KH domain (KH-domain type II)"/>
    <property type="match status" value="1"/>
</dbReference>
<dbReference type="SUPFAM" id="SSF54821">
    <property type="entry name" value="Ribosomal protein S3 C-terminal domain"/>
    <property type="match status" value="1"/>
</dbReference>
<dbReference type="PROSITE" id="PS50823">
    <property type="entry name" value="KH_TYPE_2"/>
    <property type="match status" value="1"/>
</dbReference>
<dbReference type="PROSITE" id="PS00548">
    <property type="entry name" value="RIBOSOMAL_S3"/>
    <property type="match status" value="1"/>
</dbReference>
<feature type="chain" id="PRO_0000230735" description="Small ribosomal subunit protein uS3">
    <location>
        <begin position="1"/>
        <end position="217"/>
    </location>
</feature>
<feature type="domain" description="KH type-2" evidence="1">
    <location>
        <begin position="38"/>
        <end position="106"/>
    </location>
</feature>
<keyword id="KW-0687">Ribonucleoprotein</keyword>
<keyword id="KW-0689">Ribosomal protein</keyword>
<keyword id="KW-0694">RNA-binding</keyword>
<keyword id="KW-0699">rRNA-binding</keyword>
<name>RS3_STRT1</name>
<gene>
    <name evidence="1" type="primary">rpsC</name>
    <name type="ordered locus">str1928</name>
</gene>
<sequence length="217" mass="24073">MGQKVHPIGLRVGIIRDWDAKWYAEKEYADYLHEDLAIRKFIQKELADASVSTIEIVRAVNKVIVSLHTAKPGMVIGKGGSNVDALRAQLNKLTGKQVHINIVEIKKPDLDAHLVGETIARQLEQRVAFRRAQKQAIQRAMRAGAKGIKTQVSGRLNGADIARAEGYSEGTVPLHTLRADIDYAWEEADTTYGKLGVKVWIYRGEVLPARKNTKGGK</sequence>
<protein>
    <recommendedName>
        <fullName evidence="1">Small ribosomal subunit protein uS3</fullName>
    </recommendedName>
    <alternativeName>
        <fullName evidence="2">30S ribosomal protein S3</fullName>
    </alternativeName>
</protein>